<dbReference type="EC" id="2.7.13.3" evidence="1"/>
<dbReference type="EMBL" id="CP000029">
    <property type="protein sequence ID" value="AAW53341.1"/>
    <property type="molecule type" value="Genomic_DNA"/>
</dbReference>
<dbReference type="RefSeq" id="WP_002437327.1">
    <property type="nucleotide sequence ID" value="NC_002976.3"/>
</dbReference>
<dbReference type="SMR" id="Q5HK19"/>
<dbReference type="STRING" id="176279.SERP2533"/>
<dbReference type="BindingDB" id="Q5HK19"/>
<dbReference type="ChEMBL" id="CHEMBL4295848"/>
<dbReference type="GeneID" id="50017435"/>
<dbReference type="KEGG" id="ser:SERP2533"/>
<dbReference type="eggNOG" id="COG5002">
    <property type="taxonomic scope" value="Bacteria"/>
</dbReference>
<dbReference type="HOGENOM" id="CLU_000445_89_2_9"/>
<dbReference type="Proteomes" id="UP000000531">
    <property type="component" value="Chromosome"/>
</dbReference>
<dbReference type="GO" id="GO:0005886">
    <property type="term" value="C:plasma membrane"/>
    <property type="evidence" value="ECO:0007669"/>
    <property type="project" value="UniProtKB-SubCell"/>
</dbReference>
<dbReference type="GO" id="GO:0005524">
    <property type="term" value="F:ATP binding"/>
    <property type="evidence" value="ECO:0007669"/>
    <property type="project" value="UniProtKB-KW"/>
</dbReference>
<dbReference type="GO" id="GO:0000156">
    <property type="term" value="F:phosphorelay response regulator activity"/>
    <property type="evidence" value="ECO:0007669"/>
    <property type="project" value="TreeGrafter"/>
</dbReference>
<dbReference type="GO" id="GO:0000155">
    <property type="term" value="F:phosphorelay sensor kinase activity"/>
    <property type="evidence" value="ECO:0007669"/>
    <property type="project" value="InterPro"/>
</dbReference>
<dbReference type="GO" id="GO:0030295">
    <property type="term" value="F:protein kinase activator activity"/>
    <property type="evidence" value="ECO:0007669"/>
    <property type="project" value="TreeGrafter"/>
</dbReference>
<dbReference type="GO" id="GO:0007234">
    <property type="term" value="P:osmosensory signaling via phosphorelay pathway"/>
    <property type="evidence" value="ECO:0007669"/>
    <property type="project" value="TreeGrafter"/>
</dbReference>
<dbReference type="GO" id="GO:0006355">
    <property type="term" value="P:regulation of DNA-templated transcription"/>
    <property type="evidence" value="ECO:0007669"/>
    <property type="project" value="InterPro"/>
</dbReference>
<dbReference type="CDD" id="cd06225">
    <property type="entry name" value="HAMP"/>
    <property type="match status" value="1"/>
</dbReference>
<dbReference type="CDD" id="cd00075">
    <property type="entry name" value="HATPase"/>
    <property type="match status" value="1"/>
</dbReference>
<dbReference type="CDD" id="cd00082">
    <property type="entry name" value="HisKA"/>
    <property type="match status" value="1"/>
</dbReference>
<dbReference type="CDD" id="cd00130">
    <property type="entry name" value="PAS"/>
    <property type="match status" value="1"/>
</dbReference>
<dbReference type="FunFam" id="1.10.8.500:FF:000001">
    <property type="entry name" value="Cell wall metabolism sensor histidine kinase"/>
    <property type="match status" value="1"/>
</dbReference>
<dbReference type="FunFam" id="3.30.565.10:FF:000006">
    <property type="entry name" value="Sensor histidine kinase WalK"/>
    <property type="match status" value="1"/>
</dbReference>
<dbReference type="FunFam" id="1.10.287.130:FF:000001">
    <property type="entry name" value="Two-component sensor histidine kinase"/>
    <property type="match status" value="1"/>
</dbReference>
<dbReference type="Gene3D" id="1.10.287.130">
    <property type="match status" value="1"/>
</dbReference>
<dbReference type="Gene3D" id="1.10.8.500">
    <property type="entry name" value="HAMP domain in histidine kinase"/>
    <property type="match status" value="1"/>
</dbReference>
<dbReference type="Gene3D" id="3.30.565.10">
    <property type="entry name" value="Histidine kinase-like ATPase, C-terminal domain"/>
    <property type="match status" value="1"/>
</dbReference>
<dbReference type="Gene3D" id="3.30.450.20">
    <property type="entry name" value="PAS domain"/>
    <property type="match status" value="2"/>
</dbReference>
<dbReference type="InterPro" id="IPR003660">
    <property type="entry name" value="HAMP_dom"/>
</dbReference>
<dbReference type="InterPro" id="IPR036890">
    <property type="entry name" value="HATPase_C_sf"/>
</dbReference>
<dbReference type="InterPro" id="IPR005467">
    <property type="entry name" value="His_kinase_dom"/>
</dbReference>
<dbReference type="InterPro" id="IPR003661">
    <property type="entry name" value="HisK_dim/P_dom"/>
</dbReference>
<dbReference type="InterPro" id="IPR036097">
    <property type="entry name" value="HisK_dim/P_sf"/>
</dbReference>
<dbReference type="InterPro" id="IPR052545">
    <property type="entry name" value="Light-responsive_reg"/>
</dbReference>
<dbReference type="InterPro" id="IPR000014">
    <property type="entry name" value="PAS"/>
</dbReference>
<dbReference type="InterPro" id="IPR000700">
    <property type="entry name" value="PAS-assoc_C"/>
</dbReference>
<dbReference type="InterPro" id="IPR035965">
    <property type="entry name" value="PAS-like_dom_sf"/>
</dbReference>
<dbReference type="InterPro" id="IPR013767">
    <property type="entry name" value="PAS_fold"/>
</dbReference>
<dbReference type="InterPro" id="IPR049814">
    <property type="entry name" value="Resp_reg_WalK"/>
</dbReference>
<dbReference type="InterPro" id="IPR029151">
    <property type="entry name" value="Sensor-like_sf"/>
</dbReference>
<dbReference type="InterPro" id="IPR004358">
    <property type="entry name" value="Sig_transdc_His_kin-like_C"/>
</dbReference>
<dbReference type="NCBIfam" id="NF033092">
    <property type="entry name" value="HK_WalK"/>
    <property type="match status" value="1"/>
</dbReference>
<dbReference type="NCBIfam" id="TIGR00229">
    <property type="entry name" value="sensory_box"/>
    <property type="match status" value="1"/>
</dbReference>
<dbReference type="PANTHER" id="PTHR42878:SF7">
    <property type="entry name" value="SENSOR HISTIDINE KINASE GLRK"/>
    <property type="match status" value="1"/>
</dbReference>
<dbReference type="PANTHER" id="PTHR42878">
    <property type="entry name" value="TWO-COMPONENT HISTIDINE KINASE"/>
    <property type="match status" value="1"/>
</dbReference>
<dbReference type="Pfam" id="PF23846">
    <property type="entry name" value="Cache_WalK"/>
    <property type="match status" value="1"/>
</dbReference>
<dbReference type="Pfam" id="PF00672">
    <property type="entry name" value="HAMP"/>
    <property type="match status" value="1"/>
</dbReference>
<dbReference type="Pfam" id="PF02518">
    <property type="entry name" value="HATPase_c"/>
    <property type="match status" value="1"/>
</dbReference>
<dbReference type="Pfam" id="PF00512">
    <property type="entry name" value="HisKA"/>
    <property type="match status" value="1"/>
</dbReference>
<dbReference type="Pfam" id="PF00989">
    <property type="entry name" value="PAS"/>
    <property type="match status" value="1"/>
</dbReference>
<dbReference type="PRINTS" id="PR00344">
    <property type="entry name" value="BCTRLSENSOR"/>
</dbReference>
<dbReference type="SMART" id="SM00304">
    <property type="entry name" value="HAMP"/>
    <property type="match status" value="1"/>
</dbReference>
<dbReference type="SMART" id="SM00387">
    <property type="entry name" value="HATPase_c"/>
    <property type="match status" value="1"/>
</dbReference>
<dbReference type="SMART" id="SM00388">
    <property type="entry name" value="HisKA"/>
    <property type="match status" value="1"/>
</dbReference>
<dbReference type="SMART" id="SM00091">
    <property type="entry name" value="PAS"/>
    <property type="match status" value="1"/>
</dbReference>
<dbReference type="SUPFAM" id="SSF55874">
    <property type="entry name" value="ATPase domain of HSP90 chaperone/DNA topoisomerase II/histidine kinase"/>
    <property type="match status" value="1"/>
</dbReference>
<dbReference type="SUPFAM" id="SSF158472">
    <property type="entry name" value="HAMP domain-like"/>
    <property type="match status" value="1"/>
</dbReference>
<dbReference type="SUPFAM" id="SSF47384">
    <property type="entry name" value="Homodimeric domain of signal transducing histidine kinase"/>
    <property type="match status" value="1"/>
</dbReference>
<dbReference type="SUPFAM" id="SSF55785">
    <property type="entry name" value="PYP-like sensor domain (PAS domain)"/>
    <property type="match status" value="1"/>
</dbReference>
<dbReference type="SUPFAM" id="SSF103190">
    <property type="entry name" value="Sensory domain-like"/>
    <property type="match status" value="1"/>
</dbReference>
<dbReference type="PROSITE" id="PS50885">
    <property type="entry name" value="HAMP"/>
    <property type="match status" value="1"/>
</dbReference>
<dbReference type="PROSITE" id="PS50109">
    <property type="entry name" value="HIS_KIN"/>
    <property type="match status" value="1"/>
</dbReference>
<dbReference type="PROSITE" id="PS50113">
    <property type="entry name" value="PAC"/>
    <property type="match status" value="1"/>
</dbReference>
<dbReference type="PROSITE" id="PS50112">
    <property type="entry name" value="PAS"/>
    <property type="match status" value="1"/>
</dbReference>
<sequence>MKWLKQLQSLHTKLVIVYVLLIIIGMQIIGLYFTNSLEKELLDNFKKNITQYAKQLDVNIEKVYKDKDKGSVNAQKDIQDLLNEYANRQEIGEIRFIDKDQIIMATTKQSNRGLINQKVNDGSVQKALSLGQTNDHMVLKDYGSGKERVWVYNIPVKVDKQTIGDIYIESKINDVYNQLNNINQIFIVGTAISLFITVILGFFIARTITKPITDMRNQTVEMSKGNYTQRVKIYGNDEIGELALAFNNLSKRVQEAQANTESEKRRLDSVITHMSDGILATDRRGRVRIANDMALKMLGLAKEDVIGYYMLGVLNLENEFSLEEIQENSDSFLLDINEEEGIIARVNFSTIVQETGFVTGYIAVLHDVTEQQQVERERREFVANVSHELRTPLTSMNSYIEALEEGAWQDKELAPSFLSVTREETERMIRLVNDLLQLSKMDNESDQITKEIIDFNMFINKIINRHEMAAKDTTFVREIPQQTIFAEIDPDKMTQVFDNVITNAMKYSRGEKRVEFHVKQNALYNRMTIRIKDNGIGIPINKVDKIFDRFYRVDKARTRKMGGTGLGLAISKEIVEAHNGRIWANSVEGQGTSIFITLPCEIIEDGDWDE</sequence>
<name>WALK_STAEQ</name>
<proteinExistence type="evidence at protein level"/>
<protein>
    <recommendedName>
        <fullName evidence="9">Sensor protein kinase WalK</fullName>
        <ecNumber evidence="1">2.7.13.3</ecNumber>
    </recommendedName>
</protein>
<gene>
    <name type="primary">walK</name>
    <name type="synonym">yycG</name>
    <name type="ordered locus">SERP2533</name>
</gene>
<keyword id="KW-0067">ATP-binding</keyword>
<keyword id="KW-1003">Cell membrane</keyword>
<keyword id="KW-0418">Kinase</keyword>
<keyword id="KW-0472">Membrane</keyword>
<keyword id="KW-0547">Nucleotide-binding</keyword>
<keyword id="KW-0597">Phosphoprotein</keyword>
<keyword id="KW-1185">Reference proteome</keyword>
<keyword id="KW-0808">Transferase</keyword>
<keyword id="KW-0812">Transmembrane</keyword>
<keyword id="KW-1133">Transmembrane helix</keyword>
<keyword id="KW-0902">Two-component regulatory system</keyword>
<accession>Q5HK19</accession>
<feature type="chain" id="PRO_0000353066" description="Sensor protein kinase WalK">
    <location>
        <begin position="1"/>
        <end position="610"/>
    </location>
</feature>
<feature type="transmembrane region" description="Helical" evidence="3">
    <location>
        <begin position="14"/>
        <end position="34"/>
    </location>
</feature>
<feature type="transmembrane region" description="Helical" evidence="3">
    <location>
        <begin position="185"/>
        <end position="205"/>
    </location>
</feature>
<feature type="domain" description="HAMP" evidence="4">
    <location>
        <begin position="206"/>
        <end position="258"/>
    </location>
</feature>
<feature type="domain" description="PAS" evidence="6">
    <location>
        <begin position="263"/>
        <end position="334"/>
    </location>
</feature>
<feature type="domain" description="PAC" evidence="7">
    <location>
        <begin position="327"/>
        <end position="380"/>
    </location>
</feature>
<feature type="domain" description="Histidine kinase" evidence="5">
    <location>
        <begin position="384"/>
        <end position="602"/>
    </location>
</feature>
<feature type="modified residue" description="Phosphohistidine; by autocatalysis" evidence="5">
    <location>
        <position position="387"/>
    </location>
</feature>
<evidence type="ECO:0000250" key="1">
    <source>
        <dbReference type="UniProtKB" id="O34206"/>
    </source>
</evidence>
<evidence type="ECO:0000250" key="2">
    <source>
        <dbReference type="UniProtKB" id="Q2G2U4"/>
    </source>
</evidence>
<evidence type="ECO:0000255" key="3"/>
<evidence type="ECO:0000255" key="4">
    <source>
        <dbReference type="PROSITE-ProRule" id="PRU00102"/>
    </source>
</evidence>
<evidence type="ECO:0000255" key="5">
    <source>
        <dbReference type="PROSITE-ProRule" id="PRU00107"/>
    </source>
</evidence>
<evidence type="ECO:0000255" key="6">
    <source>
        <dbReference type="PROSITE-ProRule" id="PRU00140"/>
    </source>
</evidence>
<evidence type="ECO:0000255" key="7">
    <source>
        <dbReference type="PROSITE-ProRule" id="PRU00141"/>
    </source>
</evidence>
<evidence type="ECO:0000269" key="8">
    <source>
    </source>
</evidence>
<evidence type="ECO:0000305" key="9"/>
<organism>
    <name type="scientific">Staphylococcus epidermidis (strain ATCC 35984 / DSM 28319 / BCRC 17069 / CCUG 31568 / BM 3577 / RP62A)</name>
    <dbReference type="NCBI Taxonomy" id="176279"/>
    <lineage>
        <taxon>Bacteria</taxon>
        <taxon>Bacillati</taxon>
        <taxon>Bacillota</taxon>
        <taxon>Bacilli</taxon>
        <taxon>Bacillales</taxon>
        <taxon>Staphylococcaceae</taxon>
        <taxon>Staphylococcus</taxon>
    </lineage>
</organism>
<reference key="1">
    <citation type="journal article" date="2005" name="J. Bacteriol.">
        <title>Insights on evolution of virulence and resistance from the complete genome analysis of an early methicillin-resistant Staphylococcus aureus strain and a biofilm-producing methicillin-resistant Staphylococcus epidermidis strain.</title>
        <authorList>
            <person name="Gill S.R."/>
            <person name="Fouts D.E."/>
            <person name="Archer G.L."/>
            <person name="Mongodin E.F."/>
            <person name="DeBoy R.T."/>
            <person name="Ravel J."/>
            <person name="Paulsen I.T."/>
            <person name="Kolonay J.F."/>
            <person name="Brinkac L.M."/>
            <person name="Beanan M.J."/>
            <person name="Dodson R.J."/>
            <person name="Daugherty S.C."/>
            <person name="Madupu R."/>
            <person name="Angiuoli S.V."/>
            <person name="Durkin A.S."/>
            <person name="Haft D.H."/>
            <person name="Vamathevan J.J."/>
            <person name="Khouri H."/>
            <person name="Utterback T.R."/>
            <person name="Lee C."/>
            <person name="Dimitrov G."/>
            <person name="Jiang L."/>
            <person name="Qin H."/>
            <person name="Weidman J."/>
            <person name="Tran K."/>
            <person name="Kang K.H."/>
            <person name="Hance I.R."/>
            <person name="Nelson K.E."/>
            <person name="Fraser C.M."/>
        </authorList>
    </citation>
    <scope>NUCLEOTIDE SEQUENCE [LARGE SCALE GENOMIC DNA]</scope>
    <source>
        <strain>ATCC 35984 / DSM 28319 / BCRC 17069 / CCUG 31568 / BM 3577 / RP62A</strain>
    </source>
</reference>
<reference key="2">
    <citation type="journal article" date="2006" name="BMC Microbiol.">
        <title>Structure-based discovery of inhibitors of the YycG histidine kinase: new chemical leads to combat Staphylococcus epidermidis infections.</title>
        <authorList>
            <person name="Qin Z.-Q."/>
            <person name="Zhang J."/>
            <person name="Xu B."/>
            <person name="Chen L."/>
            <person name="Wu Y."/>
            <person name="Yang X."/>
            <person name="Shen X."/>
            <person name="Molin S."/>
            <person name="Danchin A."/>
            <person name="Jiang H."/>
            <person name="Qu D."/>
        </authorList>
    </citation>
    <scope>FUNCTION IN REGULATING CELL WALL METABOLISM AND BIOFILM FORMATION</scope>
</reference>
<comment type="function">
    <text evidence="2 8">Member of the two-component regulatory system WalK/WalR that regulates genes involved in autolysis, biofilm formation and cell wall metabolism. WalK functions as a sensor protein kinase which is autophosphorylated at a histidine residue and transfers its phosphate group to WalR.</text>
</comment>
<comment type="catalytic activity">
    <reaction evidence="1">
        <text>ATP + protein L-histidine = ADP + protein N-phospho-L-histidine.</text>
        <dbReference type="EC" id="2.7.13.3"/>
    </reaction>
</comment>
<comment type="subcellular location">
    <subcellularLocation>
        <location evidence="9">Cell membrane</location>
        <topology evidence="3">Multi-pass membrane protein</topology>
    </subcellularLocation>
</comment>
<comment type="PTM">
    <text evidence="2">Autophosphorylated.</text>
</comment>